<feature type="chain" id="PRO_0000058395" description="Alpha-D-ribose 1-methylphosphonate 5-triphosphate synthase subunit PhnI">
    <location>
        <begin position="1"/>
        <end position="354"/>
    </location>
</feature>
<feature type="sequence variant" description="In strain: B.">
    <original>G</original>
    <variation>D</variation>
    <location>
        <position position="264"/>
    </location>
</feature>
<feature type="sequence variant" description="In strain: B.">
    <original>Q</original>
    <variation>K</variation>
    <location>
        <position position="351"/>
    </location>
</feature>
<feature type="strand" evidence="4">
    <location>
        <begin position="2"/>
        <end position="4"/>
    </location>
</feature>
<feature type="helix" evidence="4">
    <location>
        <begin position="8"/>
        <end position="24"/>
    </location>
</feature>
<feature type="helix" evidence="4">
    <location>
        <begin position="34"/>
        <end position="40"/>
    </location>
</feature>
<feature type="helix" evidence="4">
    <location>
        <begin position="42"/>
        <end position="52"/>
    </location>
</feature>
<feature type="helix" evidence="4">
    <location>
        <begin position="57"/>
        <end position="66"/>
    </location>
</feature>
<feature type="turn" evidence="4">
    <location>
        <begin position="67"/>
        <end position="69"/>
    </location>
</feature>
<feature type="helix" evidence="4">
    <location>
        <begin position="71"/>
        <end position="83"/>
    </location>
</feature>
<feature type="strand" evidence="4">
    <location>
        <begin position="87"/>
        <end position="90"/>
    </location>
</feature>
<feature type="helix" evidence="4">
    <location>
        <begin position="96"/>
        <end position="98"/>
    </location>
</feature>
<feature type="strand" evidence="4">
    <location>
        <begin position="100"/>
        <end position="105"/>
    </location>
</feature>
<feature type="strand" evidence="4">
    <location>
        <begin position="107"/>
        <end position="111"/>
    </location>
</feature>
<feature type="helix" evidence="4">
    <location>
        <begin position="131"/>
        <end position="134"/>
    </location>
</feature>
<feature type="helix" evidence="4">
    <location>
        <begin position="155"/>
        <end position="161"/>
    </location>
</feature>
<feature type="turn" evidence="4">
    <location>
        <begin position="178"/>
        <end position="180"/>
    </location>
</feature>
<feature type="helix" evidence="4">
    <location>
        <begin position="189"/>
        <end position="198"/>
    </location>
</feature>
<feature type="helix" evidence="4">
    <location>
        <begin position="201"/>
        <end position="212"/>
    </location>
</feature>
<feature type="turn" evidence="5">
    <location>
        <begin position="213"/>
        <end position="216"/>
    </location>
</feature>
<feature type="strand" evidence="4">
    <location>
        <begin position="221"/>
        <end position="234"/>
    </location>
</feature>
<feature type="turn" evidence="4">
    <location>
        <begin position="237"/>
        <end position="239"/>
    </location>
</feature>
<feature type="strand" evidence="4">
    <location>
        <begin position="243"/>
        <end position="260"/>
    </location>
</feature>
<feature type="strand" evidence="4">
    <location>
        <begin position="263"/>
        <end position="265"/>
    </location>
</feature>
<feature type="strand" evidence="4">
    <location>
        <begin position="268"/>
        <end position="279"/>
    </location>
</feature>
<feature type="helix" evidence="4">
    <location>
        <begin position="282"/>
        <end position="293"/>
    </location>
</feature>
<feature type="helix" evidence="4">
    <location>
        <begin position="296"/>
        <end position="299"/>
    </location>
</feature>
<feature type="helix" evidence="4">
    <location>
        <begin position="306"/>
        <end position="308"/>
    </location>
</feature>
<feature type="helix" evidence="4">
    <location>
        <begin position="310"/>
        <end position="315"/>
    </location>
</feature>
<feature type="helix" evidence="4">
    <location>
        <begin position="319"/>
        <end position="327"/>
    </location>
</feature>
<feature type="helix" evidence="4">
    <location>
        <begin position="328"/>
        <end position="330"/>
    </location>
</feature>
<feature type="helix" evidence="4">
    <location>
        <begin position="334"/>
        <end position="349"/>
    </location>
</feature>
<gene>
    <name type="primary">phnI</name>
    <name type="ordered locus">b4099</name>
    <name type="ordered locus">JW4060</name>
</gene>
<keyword id="KW-0002">3D-structure</keyword>
<keyword id="KW-1185">Reference proteome</keyword>
<keyword id="KW-0808">Transferase</keyword>
<sequence length="354" mass="38853">MYVAVKGGEKAIDAAHALQESRRRGDTDLPELSVAQIEQQLNLAVDRVMTEGGIADRELAALALKQASGDNVEAIFLLRAYRTTLAKLAVSEPLDTTGMRLERRISAVYKDIPGGQLLGPTYDYTHRLLDFTLLANGEAPTLTTADSEQQPSPHVFSLLARQGLAKFEEDSGAQPDDITRTPPVYPCSRSSRLQQLMRGDEGYLLALAYSTQRGYGRNHPFAGEIRSGYIDVSIVPEELGFAVNVGELLMTECEMVNGFIDPPGEPPHFTRGYGLVFGMSERKAMAMALVDRALQAPEYGEHATGPAQDEEFVLAHADNVEAAGFVSHLKLPHYVDFQAELELLKRLQQEQNHG</sequence>
<organism>
    <name type="scientific">Escherichia coli (strain K12)</name>
    <dbReference type="NCBI Taxonomy" id="83333"/>
    <lineage>
        <taxon>Bacteria</taxon>
        <taxon>Pseudomonadati</taxon>
        <taxon>Pseudomonadota</taxon>
        <taxon>Gammaproteobacteria</taxon>
        <taxon>Enterobacterales</taxon>
        <taxon>Enterobacteriaceae</taxon>
        <taxon>Escherichia</taxon>
    </lineage>
</organism>
<evidence type="ECO:0000269" key="1">
    <source>
    </source>
</evidence>
<evidence type="ECO:0000269" key="2">
    <source>
    </source>
</evidence>
<evidence type="ECO:0000305" key="3"/>
<evidence type="ECO:0007829" key="4">
    <source>
        <dbReference type="PDB" id="4XB6"/>
    </source>
</evidence>
<evidence type="ECO:0007829" key="5">
    <source>
        <dbReference type="PDB" id="7Z15"/>
    </source>
</evidence>
<reference key="1">
    <citation type="journal article" date="1990" name="J. Biol. Chem.">
        <title>Molecular biology of carbon-phosphorus bond cleavage. Cloning and sequencing of the phn (psiD) genes involved in alkylphosphonate uptake and C-P lyase activity in Escherichia coli B.</title>
        <authorList>
            <person name="Chen C.-M."/>
            <person name="Ye Q.-Z."/>
            <person name="Zhu Z."/>
            <person name="Wanner B.L."/>
            <person name="Walsh C.T."/>
        </authorList>
    </citation>
    <scope>NUCLEOTIDE SEQUENCE [GENOMIC DNA]</scope>
    <source>
        <strain>B</strain>
    </source>
</reference>
<reference key="2">
    <citation type="journal article" date="1991" name="J. Bacteriol.">
        <title>Molecular analysis of the cryptic and functional phn operons for phosphonate use in Escherichia coli K-12.</title>
        <authorList>
            <person name="Makino K."/>
            <person name="Kim S.K."/>
            <person name="Shinagawa H."/>
            <person name="Amemura M."/>
            <person name="Nakata A."/>
        </authorList>
    </citation>
    <scope>NUCLEOTIDE SEQUENCE [GENOMIC DNA]</scope>
    <source>
        <strain>K12</strain>
    </source>
</reference>
<reference key="3">
    <citation type="journal article" date="1995" name="Nucleic Acids Res.">
        <title>Analysis of the Escherichia coli genome VI: DNA sequence of the region from 92.8 through 100 minutes.</title>
        <authorList>
            <person name="Burland V.D."/>
            <person name="Plunkett G. III"/>
            <person name="Sofia H.J."/>
            <person name="Daniels D.L."/>
            <person name="Blattner F.R."/>
        </authorList>
    </citation>
    <scope>NUCLEOTIDE SEQUENCE [LARGE SCALE GENOMIC DNA]</scope>
    <source>
        <strain>K12 / MG1655 / ATCC 47076</strain>
    </source>
</reference>
<reference key="4">
    <citation type="journal article" date="1997" name="Science">
        <title>The complete genome sequence of Escherichia coli K-12.</title>
        <authorList>
            <person name="Blattner F.R."/>
            <person name="Plunkett G. III"/>
            <person name="Bloch C.A."/>
            <person name="Perna N.T."/>
            <person name="Burland V."/>
            <person name="Riley M."/>
            <person name="Collado-Vides J."/>
            <person name="Glasner J.D."/>
            <person name="Rode C.K."/>
            <person name="Mayhew G.F."/>
            <person name="Gregor J."/>
            <person name="Davis N.W."/>
            <person name="Kirkpatrick H.A."/>
            <person name="Goeden M.A."/>
            <person name="Rose D.J."/>
            <person name="Mau B."/>
            <person name="Shao Y."/>
        </authorList>
    </citation>
    <scope>NUCLEOTIDE SEQUENCE [LARGE SCALE GENOMIC DNA]</scope>
    <source>
        <strain>K12 / MG1655 / ATCC 47076</strain>
    </source>
</reference>
<reference key="5">
    <citation type="journal article" date="2006" name="Mol. Syst. Biol.">
        <title>Highly accurate genome sequences of Escherichia coli K-12 strains MG1655 and W3110.</title>
        <authorList>
            <person name="Hayashi K."/>
            <person name="Morooka N."/>
            <person name="Yamamoto Y."/>
            <person name="Fujita K."/>
            <person name="Isono K."/>
            <person name="Choi S."/>
            <person name="Ohtsubo E."/>
            <person name="Baba T."/>
            <person name="Wanner B.L."/>
            <person name="Mori H."/>
            <person name="Horiuchi T."/>
        </authorList>
    </citation>
    <scope>NUCLEOTIDE SEQUENCE [LARGE SCALE GENOMIC DNA]</scope>
    <source>
        <strain>K12 / W3110 / ATCC 27325 / DSM 5911</strain>
    </source>
</reference>
<reference key="6">
    <citation type="journal article" date="2011" name="Nature">
        <title>Intermediates in the transformation of phosphonates to phosphate by bacteria.</title>
        <authorList>
            <person name="Kamat S.S."/>
            <person name="Williams H.J."/>
            <person name="Raushel F.M."/>
        </authorList>
    </citation>
    <scope>FUNCTION</scope>
    <scope>CATALYTIC ACTIVITY</scope>
    <scope>BIOPHYSICOCHEMICAL PROPERTIES</scope>
    <source>
        <strain>K12 / MG1655 / ATCC 47076</strain>
    </source>
</reference>
<reference key="7">
    <citation type="journal article" date="2011" name="Proc. Natl. Acad. Sci. U.S.A.">
        <title>Five phosphonate operon gene products as components of a multi-subunit complex of the carbon-phosphorus lyase pathway.</title>
        <authorList>
            <person name="Jochimsen B."/>
            <person name="Lolle S."/>
            <person name="McSorley F.R."/>
            <person name="Nabi M."/>
            <person name="Stougaard J."/>
            <person name="Zechel D.L."/>
            <person name="Hove-Jensen B."/>
        </authorList>
    </citation>
    <scope>SUBUNIT</scope>
    <source>
        <strain>K12</strain>
    </source>
</reference>
<comment type="function">
    <text evidence="2">Together with PhnG, PhnH and PhnL is required for the transfer of the ribose triphosphate moiety from ATP to methyl phosphonate. PhnI alone has nucleosidase activity, catalyzing the hydrolysis of ATP or GTP forming alpha-D-ribose 5-triphosphate and adenine or guanine, respectively.</text>
</comment>
<comment type="catalytic activity">
    <reaction evidence="2">
        <text>methylphosphonate + ATP = alpha-D-ribose 1-methylphosphonate 5-triphosphate + adenine</text>
        <dbReference type="Rhea" id="RHEA:34679"/>
        <dbReference type="ChEBI" id="CHEBI:16708"/>
        <dbReference type="ChEBI" id="CHEBI:30616"/>
        <dbReference type="ChEBI" id="CHEBI:68684"/>
        <dbReference type="ChEBI" id="CHEBI:68823"/>
        <dbReference type="EC" id="2.7.8.37"/>
    </reaction>
</comment>
<comment type="catalytic activity">
    <reaction evidence="2">
        <text>ATP + H2O = D-ribose 5-triphosphate + adenine</text>
        <dbReference type="Rhea" id="RHEA:44164"/>
        <dbReference type="ChEBI" id="CHEBI:15377"/>
        <dbReference type="ChEBI" id="CHEBI:16708"/>
        <dbReference type="ChEBI" id="CHEBI:30616"/>
        <dbReference type="ChEBI" id="CHEBI:91013"/>
    </reaction>
</comment>
<comment type="biophysicochemical properties">
    <kinetics>
        <KM evidence="2">64 uM for GTP (in the presence of PhnI alone)</KM>
        <KM evidence="2">95 uM for ATP (in the presence of PhnI alone)</KM>
        <KM evidence="2">80 uM for GTP (in the presence of PhnI, PhnG, PhnH and PhnL)</KM>
        <KM evidence="2">56 uM for ATP (in the presence of PhnI, PhnG, PhnH and PhnL)</KM>
        <text>kcat is 1.4 sec(-1) for ATP hydrolysis in the presence of PhnI alone, and 20 sec(-1) for RPnTP synthesis from ATP in the presence of PhnI, PhnG, PhnH and PhnL.</text>
    </kinetics>
</comment>
<comment type="subunit">
    <text evidence="1">Forms a complex with PhnG, PhnH, PhnJ and PhnK with the suggested composition PhnG(4)H(2)I(2)J(2)K.</text>
</comment>
<comment type="interaction">
    <interactant intactId="EBI-1127704">
        <id>P16687</id>
    </interactant>
    <interactant intactId="EBI-9126715">
        <id>P16685</id>
        <label>phnG</label>
    </interactant>
    <organismsDiffer>false</organismsDiffer>
    <experiments>14</experiments>
</comment>
<comment type="miscellaneous">
    <text>The sequence shown is that of strain K12.</text>
</comment>
<comment type="similarity">
    <text evidence="3">Belongs to the PhnI family.</text>
</comment>
<proteinExistence type="evidence at protein level"/>
<dbReference type="EC" id="2.7.8.37"/>
<dbReference type="EMBL" id="J05260">
    <property type="protein sequence ID" value="AAA24347.1"/>
    <property type="molecule type" value="Genomic_DNA"/>
</dbReference>
<dbReference type="EMBL" id="D90227">
    <property type="protein sequence ID" value="BAA14269.1"/>
    <property type="molecule type" value="Genomic_DNA"/>
</dbReference>
<dbReference type="EMBL" id="U14003">
    <property type="protein sequence ID" value="AAA96998.1"/>
    <property type="molecule type" value="Genomic_DNA"/>
</dbReference>
<dbReference type="EMBL" id="U00096">
    <property type="protein sequence ID" value="AAC77060.1"/>
    <property type="molecule type" value="Genomic_DNA"/>
</dbReference>
<dbReference type="EMBL" id="AP009048">
    <property type="protein sequence ID" value="BAE78102.1"/>
    <property type="molecule type" value="Genomic_DNA"/>
</dbReference>
<dbReference type="PIR" id="B65219">
    <property type="entry name" value="B65219"/>
</dbReference>
<dbReference type="RefSeq" id="NP_418523.1">
    <property type="nucleotide sequence ID" value="NC_000913.3"/>
</dbReference>
<dbReference type="RefSeq" id="WP_001295388.1">
    <property type="nucleotide sequence ID" value="NZ_SSZK01000016.1"/>
</dbReference>
<dbReference type="PDB" id="4XB6">
    <property type="method" value="X-ray"/>
    <property type="resolution" value="1.70 A"/>
    <property type="chains" value="C/G=1-354"/>
</dbReference>
<dbReference type="PDB" id="7Z15">
    <property type="method" value="EM"/>
    <property type="resolution" value="1.93 A"/>
    <property type="chains" value="C/G=1-354"/>
</dbReference>
<dbReference type="PDB" id="7Z16">
    <property type="method" value="EM"/>
    <property type="resolution" value="2.09 A"/>
    <property type="chains" value="C/G=1-354"/>
</dbReference>
<dbReference type="PDB" id="7Z17">
    <property type="method" value="EM"/>
    <property type="resolution" value="2.57 A"/>
    <property type="chains" value="C/G=1-354"/>
</dbReference>
<dbReference type="PDB" id="7Z18">
    <property type="method" value="EM"/>
    <property type="resolution" value="1.98 A"/>
    <property type="chains" value="C/G=1-354"/>
</dbReference>
<dbReference type="PDB" id="7Z19">
    <property type="method" value="EM"/>
    <property type="resolution" value="2.57 A"/>
    <property type="chains" value="C/G=1-354"/>
</dbReference>
<dbReference type="PDBsum" id="4XB6"/>
<dbReference type="PDBsum" id="7Z15"/>
<dbReference type="PDBsum" id="7Z16"/>
<dbReference type="PDBsum" id="7Z17"/>
<dbReference type="PDBsum" id="7Z18"/>
<dbReference type="PDBsum" id="7Z19"/>
<dbReference type="EMDB" id="EMD-14441"/>
<dbReference type="EMDB" id="EMD-14443"/>
<dbReference type="EMDB" id="EMD-14444"/>
<dbReference type="EMDB" id="EMD-14445"/>
<dbReference type="SMR" id="P16687"/>
<dbReference type="BioGRID" id="4263381">
    <property type="interactions" value="11"/>
</dbReference>
<dbReference type="BioGRID" id="852898">
    <property type="interactions" value="1"/>
</dbReference>
<dbReference type="ComplexPortal" id="CPX-1929">
    <property type="entry name" value="PhnGHIJKL complex"/>
</dbReference>
<dbReference type="DIP" id="DIP-10488N"/>
<dbReference type="FunCoup" id="P16687">
    <property type="interactions" value="151"/>
</dbReference>
<dbReference type="IntAct" id="P16687">
    <property type="interactions" value="6"/>
</dbReference>
<dbReference type="STRING" id="511145.b4099"/>
<dbReference type="PaxDb" id="511145-b4099"/>
<dbReference type="EnsemblBacteria" id="AAC77060">
    <property type="protein sequence ID" value="AAC77060"/>
    <property type="gene ID" value="b4099"/>
</dbReference>
<dbReference type="GeneID" id="948605"/>
<dbReference type="KEGG" id="ecj:JW4060"/>
<dbReference type="KEGG" id="eco:b4099"/>
<dbReference type="KEGG" id="ecoc:C3026_22155"/>
<dbReference type="PATRIC" id="fig|1411691.4.peg.2601"/>
<dbReference type="EchoBASE" id="EB0712"/>
<dbReference type="eggNOG" id="COG3626">
    <property type="taxonomic scope" value="Bacteria"/>
</dbReference>
<dbReference type="HOGENOM" id="CLU_063686_0_0_6"/>
<dbReference type="InParanoid" id="P16687"/>
<dbReference type="OMA" id="AQFTRGY"/>
<dbReference type="OrthoDB" id="9790536at2"/>
<dbReference type="PhylomeDB" id="P16687"/>
<dbReference type="BioCyc" id="EcoCyc:EG10718-MONOMER"/>
<dbReference type="BioCyc" id="MetaCyc:EG10718-MONOMER"/>
<dbReference type="SABIO-RK" id="P16687"/>
<dbReference type="EvolutionaryTrace" id="P16687"/>
<dbReference type="PRO" id="PR:P16687"/>
<dbReference type="Proteomes" id="UP000000625">
    <property type="component" value="Chromosome"/>
</dbReference>
<dbReference type="GO" id="GO:0061694">
    <property type="term" value="C:alpha-D-ribose 1-methylphosphonate 5-triphosphate synthase complex"/>
    <property type="evidence" value="ECO:0000314"/>
    <property type="project" value="EcoCyc"/>
</dbReference>
<dbReference type="GO" id="GO:1904176">
    <property type="term" value="C:carbon phosphorus lyase complex"/>
    <property type="evidence" value="ECO:0000314"/>
    <property type="project" value="EcoCyc"/>
</dbReference>
<dbReference type="GO" id="GO:0061693">
    <property type="term" value="F:alpha-D-ribose 1-methylphosphonate 5-triphosphate synthase activity"/>
    <property type="evidence" value="ECO:0000314"/>
    <property type="project" value="EcoCyc"/>
</dbReference>
<dbReference type="GO" id="GO:0019700">
    <property type="term" value="P:organic phosphonate catabolic process"/>
    <property type="evidence" value="ECO:0000315"/>
    <property type="project" value="EcoCyc"/>
</dbReference>
<dbReference type="GO" id="GO:0019634">
    <property type="term" value="P:organic phosphonate metabolic process"/>
    <property type="evidence" value="ECO:0000314"/>
    <property type="project" value="ComplexPortal"/>
</dbReference>
<dbReference type="GO" id="GO:0015716">
    <property type="term" value="P:organic phosphonate transport"/>
    <property type="evidence" value="ECO:0000314"/>
    <property type="project" value="ComplexPortal"/>
</dbReference>
<dbReference type="InterPro" id="IPR008773">
    <property type="entry name" value="PhnI"/>
</dbReference>
<dbReference type="Pfam" id="PF05861">
    <property type="entry name" value="PhnI"/>
    <property type="match status" value="1"/>
</dbReference>
<dbReference type="PIRSF" id="PIRSF007313">
    <property type="entry name" value="PhnI"/>
    <property type="match status" value="1"/>
</dbReference>
<name>PHNI_ECOLI</name>
<accession>P16687</accession>
<accession>Q2M6K4</accession>
<protein>
    <recommendedName>
        <fullName>Alpha-D-ribose 1-methylphosphonate 5-triphosphate synthase subunit PhnI</fullName>
        <shortName>RPnTP synthase subunit PhnI</shortName>
        <ecNumber>2.7.8.37</ecNumber>
    </recommendedName>
    <alternativeName>
        <fullName>Ribose 1-methylphosphonate 5-triphosphate synthase nucleosidase subunit</fullName>
    </alternativeName>
</protein>